<comment type="subcellular location">
    <subcellularLocation>
        <location>Plastid</location>
        <location>Chloroplast</location>
    </subcellularLocation>
</comment>
<comment type="similarity">
    <text evidence="1">Belongs to the bacterial ribosomal protein bL36 family.</text>
</comment>
<feature type="chain" id="PRO_0000126344" description="Large ribosomal subunit protein bL36c">
    <location>
        <begin position="1"/>
        <end position="37"/>
    </location>
</feature>
<keyword id="KW-0150">Chloroplast</keyword>
<keyword id="KW-0934">Plastid</keyword>
<keyword id="KW-0687">Ribonucleoprotein</keyword>
<keyword id="KW-0689">Ribosomal protein</keyword>
<geneLocation type="chloroplast"/>
<sequence>MKIRASVRKICTKCRLIRRRGRIRVICSNPKHKQRQG</sequence>
<reference key="1">
    <citation type="journal article" date="2004" name="DNA Res.">
        <title>Complete nucleotide sequence of the sugarcane (Saccharum officinarum) chloroplast genome: a comparative analysis of four monocot chloroplast genomes.</title>
        <authorList>
            <person name="Asano T."/>
            <person name="Tsudzuki T."/>
            <person name="Takahashi S."/>
            <person name="Shimada H."/>
            <person name="Kadowaki K."/>
        </authorList>
    </citation>
    <scope>NUCLEOTIDE SEQUENCE [LARGE SCALE GENOMIC DNA]</scope>
</reference>
<proteinExistence type="inferred from homology"/>
<dbReference type="EMBL" id="AP006714">
    <property type="protein sequence ID" value="BAD27326.1"/>
    <property type="molecule type" value="Genomic_DNA"/>
</dbReference>
<dbReference type="RefSeq" id="YP_009389604.1">
    <property type="nucleotide sequence ID" value="NC_035224.1"/>
</dbReference>
<dbReference type="SMR" id="Q6ENT0"/>
<dbReference type="GeneID" id="33347842"/>
<dbReference type="GO" id="GO:0009507">
    <property type="term" value="C:chloroplast"/>
    <property type="evidence" value="ECO:0007669"/>
    <property type="project" value="UniProtKB-SubCell"/>
</dbReference>
<dbReference type="GO" id="GO:1990904">
    <property type="term" value="C:ribonucleoprotein complex"/>
    <property type="evidence" value="ECO:0007669"/>
    <property type="project" value="UniProtKB-KW"/>
</dbReference>
<dbReference type="GO" id="GO:0005840">
    <property type="term" value="C:ribosome"/>
    <property type="evidence" value="ECO:0007669"/>
    <property type="project" value="UniProtKB-KW"/>
</dbReference>
<dbReference type="GO" id="GO:0003735">
    <property type="term" value="F:structural constituent of ribosome"/>
    <property type="evidence" value="ECO:0007669"/>
    <property type="project" value="InterPro"/>
</dbReference>
<dbReference type="GO" id="GO:0006412">
    <property type="term" value="P:translation"/>
    <property type="evidence" value="ECO:0007669"/>
    <property type="project" value="UniProtKB-UniRule"/>
</dbReference>
<dbReference type="HAMAP" id="MF_00251">
    <property type="entry name" value="Ribosomal_bL36"/>
    <property type="match status" value="1"/>
</dbReference>
<dbReference type="InterPro" id="IPR000473">
    <property type="entry name" value="Ribosomal_bL36"/>
</dbReference>
<dbReference type="InterPro" id="IPR035977">
    <property type="entry name" value="Ribosomal_bL36_sp"/>
</dbReference>
<dbReference type="NCBIfam" id="TIGR01022">
    <property type="entry name" value="rpmJ_bact"/>
    <property type="match status" value="1"/>
</dbReference>
<dbReference type="PANTHER" id="PTHR42888">
    <property type="entry name" value="50S RIBOSOMAL PROTEIN L36, CHLOROPLASTIC"/>
    <property type="match status" value="1"/>
</dbReference>
<dbReference type="PANTHER" id="PTHR42888:SF1">
    <property type="entry name" value="LARGE RIBOSOMAL SUBUNIT PROTEIN BL36C"/>
    <property type="match status" value="1"/>
</dbReference>
<dbReference type="Pfam" id="PF00444">
    <property type="entry name" value="Ribosomal_L36"/>
    <property type="match status" value="1"/>
</dbReference>
<dbReference type="SUPFAM" id="SSF57840">
    <property type="entry name" value="Ribosomal protein L36"/>
    <property type="match status" value="1"/>
</dbReference>
<dbReference type="PROSITE" id="PS00828">
    <property type="entry name" value="RIBOSOMAL_L36"/>
    <property type="match status" value="1"/>
</dbReference>
<organism>
    <name type="scientific">Saccharum officinarum</name>
    <name type="common">Sugarcane</name>
    <dbReference type="NCBI Taxonomy" id="4547"/>
    <lineage>
        <taxon>Eukaryota</taxon>
        <taxon>Viridiplantae</taxon>
        <taxon>Streptophyta</taxon>
        <taxon>Embryophyta</taxon>
        <taxon>Tracheophyta</taxon>
        <taxon>Spermatophyta</taxon>
        <taxon>Magnoliopsida</taxon>
        <taxon>Liliopsida</taxon>
        <taxon>Poales</taxon>
        <taxon>Poaceae</taxon>
        <taxon>PACMAD clade</taxon>
        <taxon>Panicoideae</taxon>
        <taxon>Andropogonodae</taxon>
        <taxon>Andropogoneae</taxon>
        <taxon>Saccharinae</taxon>
        <taxon>Saccharum</taxon>
        <taxon>Saccharum officinarum species complex</taxon>
    </lineage>
</organism>
<protein>
    <recommendedName>
        <fullName evidence="1">Large ribosomal subunit protein bL36c</fullName>
    </recommendedName>
    <alternativeName>
        <fullName evidence="2">50S ribosomal protein L36, chloroplastic</fullName>
    </alternativeName>
</protein>
<gene>
    <name evidence="1" type="primary">rpl36</name>
</gene>
<accession>Q6ENT0</accession>
<name>RK36_SACOF</name>
<evidence type="ECO:0000255" key="1">
    <source>
        <dbReference type="HAMAP-Rule" id="MF_00251"/>
    </source>
</evidence>
<evidence type="ECO:0000305" key="2"/>